<accession>O67161</accession>
<sequence length="342" mass="37613">MAIKVGINGFGRIGRSFFRASWGREEIEIVAINDLTDAKHLAHLLKYDSVHGIFKGSVEAKDDSIVVDGKEIKVFAQKDPSQIPWGDLGVDVVIEATGVFRDRENASKHLQGGAKKVIITAPAKNPDITVVLGVNEEKYNPKEHNIISNASCTTNCLAPCVKVLNEAFGVEKGYMVTVHAYTNDQRLLDLPHKDFRRARAAAINIVPTTTGAAKAIGEVIPELKGKLDGTARRVPVPDGSLIDLTVVVNKAPSSVEEVNEKFREAAQKYRESGKVYLKEILQYCEDPIVSTDIVGNPHSAIFDAPLTQVIDNLVHIAAWYDNEWGYSCRLRDLVIYLAERGL</sequence>
<feature type="chain" id="PRO_0000145629" description="Glyceraldehyde-3-phosphate dehydrogenase">
    <location>
        <begin position="1"/>
        <end position="342"/>
    </location>
</feature>
<feature type="active site" description="Nucleophile" evidence="1">
    <location>
        <position position="152"/>
    </location>
</feature>
<feature type="binding site" evidence="3">
    <location>
        <begin position="12"/>
        <end position="13"/>
    </location>
    <ligand>
        <name>NAD(+)</name>
        <dbReference type="ChEBI" id="CHEBI:57540"/>
    </ligand>
</feature>
<feature type="binding site" evidence="3">
    <location>
        <position position="34"/>
    </location>
    <ligand>
        <name>NAD(+)</name>
        <dbReference type="ChEBI" id="CHEBI:57540"/>
    </ligand>
</feature>
<feature type="binding site" evidence="3">
    <location>
        <position position="78"/>
    </location>
    <ligand>
        <name>NAD(+)</name>
        <dbReference type="ChEBI" id="CHEBI:57540"/>
    </ligand>
</feature>
<feature type="binding site" evidence="3">
    <location>
        <position position="120"/>
    </location>
    <ligand>
        <name>NAD(+)</name>
        <dbReference type="ChEBI" id="CHEBI:57540"/>
    </ligand>
</feature>
<feature type="binding site" evidence="1">
    <location>
        <begin position="151"/>
        <end position="153"/>
    </location>
    <ligand>
        <name>D-glyceraldehyde 3-phosphate</name>
        <dbReference type="ChEBI" id="CHEBI:59776"/>
    </ligand>
</feature>
<feature type="binding site" evidence="1">
    <location>
        <position position="182"/>
    </location>
    <ligand>
        <name>D-glyceraldehyde 3-phosphate</name>
        <dbReference type="ChEBI" id="CHEBI:59776"/>
    </ligand>
</feature>
<feature type="binding site" evidence="1">
    <location>
        <position position="183"/>
    </location>
    <ligand>
        <name>NAD(+)</name>
        <dbReference type="ChEBI" id="CHEBI:57540"/>
    </ligand>
</feature>
<feature type="binding site" evidence="1">
    <location>
        <position position="197"/>
    </location>
    <ligand>
        <name>D-glyceraldehyde 3-phosphate</name>
        <dbReference type="ChEBI" id="CHEBI:59776"/>
    </ligand>
</feature>
<feature type="binding site" evidence="1">
    <location>
        <begin position="210"/>
        <end position="211"/>
    </location>
    <ligand>
        <name>D-glyceraldehyde 3-phosphate</name>
        <dbReference type="ChEBI" id="CHEBI:59776"/>
    </ligand>
</feature>
<feature type="binding site" evidence="1">
    <location>
        <position position="233"/>
    </location>
    <ligand>
        <name>D-glyceraldehyde 3-phosphate</name>
        <dbReference type="ChEBI" id="CHEBI:59776"/>
    </ligand>
</feature>
<feature type="binding site" evidence="3">
    <location>
        <position position="322"/>
    </location>
    <ligand>
        <name>NAD(+)</name>
        <dbReference type="ChEBI" id="CHEBI:57540"/>
    </ligand>
</feature>
<feature type="site" description="Activates thiol group during catalysis" evidence="1">
    <location>
        <position position="179"/>
    </location>
</feature>
<feature type="strand" evidence="5">
    <location>
        <begin position="4"/>
        <end position="8"/>
    </location>
</feature>
<feature type="helix" evidence="5">
    <location>
        <begin position="12"/>
        <end position="21"/>
    </location>
</feature>
<feature type="strand" evidence="5">
    <location>
        <begin position="28"/>
        <end position="33"/>
    </location>
</feature>
<feature type="helix" evidence="5">
    <location>
        <begin position="38"/>
        <end position="46"/>
    </location>
</feature>
<feature type="turn" evidence="5">
    <location>
        <begin position="49"/>
        <end position="51"/>
    </location>
</feature>
<feature type="strand" evidence="5">
    <location>
        <begin position="58"/>
        <end position="60"/>
    </location>
</feature>
<feature type="strand" evidence="5">
    <location>
        <begin position="62"/>
        <end position="67"/>
    </location>
</feature>
<feature type="strand" evidence="5">
    <location>
        <begin position="70"/>
        <end position="75"/>
    </location>
</feature>
<feature type="helix" evidence="5">
    <location>
        <begin position="80"/>
        <end position="82"/>
    </location>
</feature>
<feature type="helix" evidence="5">
    <location>
        <begin position="86"/>
        <end position="88"/>
    </location>
</feature>
<feature type="strand" evidence="5">
    <location>
        <begin position="91"/>
        <end position="95"/>
    </location>
</feature>
<feature type="strand" evidence="5">
    <location>
        <begin position="97"/>
        <end position="99"/>
    </location>
</feature>
<feature type="helix" evidence="5">
    <location>
        <begin position="103"/>
        <end position="106"/>
    </location>
</feature>
<feature type="turn" evidence="5">
    <location>
        <begin position="107"/>
        <end position="109"/>
    </location>
</feature>
<feature type="helix" evidence="5">
    <location>
        <begin position="110"/>
        <end position="112"/>
    </location>
</feature>
<feature type="strand" evidence="5">
    <location>
        <begin position="115"/>
        <end position="121"/>
    </location>
</feature>
<feature type="strand" evidence="5">
    <location>
        <begin position="127"/>
        <end position="129"/>
    </location>
</feature>
<feature type="turn" evidence="5">
    <location>
        <begin position="132"/>
        <end position="134"/>
    </location>
</feature>
<feature type="helix" evidence="5">
    <location>
        <begin position="136"/>
        <end position="138"/>
    </location>
</feature>
<feature type="turn" evidence="5">
    <location>
        <begin position="141"/>
        <end position="143"/>
    </location>
</feature>
<feature type="strand" evidence="5">
    <location>
        <begin position="146"/>
        <end position="148"/>
    </location>
</feature>
<feature type="helix" evidence="5">
    <location>
        <begin position="152"/>
        <end position="168"/>
    </location>
</feature>
<feature type="strand" evidence="5">
    <location>
        <begin position="170"/>
        <end position="180"/>
    </location>
</feature>
<feature type="strand" evidence="5">
    <location>
        <begin position="185"/>
        <end position="189"/>
    </location>
</feature>
<feature type="turn" evidence="5">
    <location>
        <begin position="195"/>
        <end position="198"/>
    </location>
</feature>
<feature type="helix" evidence="5">
    <location>
        <begin position="201"/>
        <end position="203"/>
    </location>
</feature>
<feature type="strand" evidence="5">
    <location>
        <begin position="206"/>
        <end position="208"/>
    </location>
</feature>
<feature type="helix" evidence="5">
    <location>
        <begin position="214"/>
        <end position="218"/>
    </location>
</feature>
<feature type="helix" evidence="5">
    <location>
        <begin position="221"/>
        <end position="223"/>
    </location>
</feature>
<feature type="turn" evidence="5">
    <location>
        <begin position="224"/>
        <end position="226"/>
    </location>
</feature>
<feature type="strand" evidence="5">
    <location>
        <begin position="227"/>
        <end position="235"/>
    </location>
</feature>
<feature type="strand" evidence="5">
    <location>
        <begin position="240"/>
        <end position="250"/>
    </location>
</feature>
<feature type="helix" evidence="5">
    <location>
        <begin position="255"/>
        <end position="270"/>
    </location>
</feature>
<feature type="helix" evidence="5">
    <location>
        <begin position="275"/>
        <end position="277"/>
    </location>
</feature>
<feature type="strand" evidence="5">
    <location>
        <begin position="280"/>
        <end position="284"/>
    </location>
</feature>
<feature type="helix" evidence="5">
    <location>
        <begin position="290"/>
        <end position="293"/>
    </location>
</feature>
<feature type="strand" evidence="5">
    <location>
        <begin position="299"/>
        <end position="303"/>
    </location>
</feature>
<feature type="helix" evidence="5">
    <location>
        <begin position="304"/>
        <end position="306"/>
    </location>
</feature>
<feature type="strand" evidence="5">
    <location>
        <begin position="308"/>
        <end position="310"/>
    </location>
</feature>
<feature type="strand" evidence="5">
    <location>
        <begin position="313"/>
        <end position="320"/>
    </location>
</feature>
<feature type="helix" evidence="5">
    <location>
        <begin position="324"/>
        <end position="339"/>
    </location>
</feature>
<keyword id="KW-0002">3D-structure</keyword>
<keyword id="KW-0963">Cytoplasm</keyword>
<keyword id="KW-0324">Glycolysis</keyword>
<keyword id="KW-0520">NAD</keyword>
<keyword id="KW-0547">Nucleotide-binding</keyword>
<keyword id="KW-0560">Oxidoreductase</keyword>
<keyword id="KW-1185">Reference proteome</keyword>
<comment type="function">
    <text evidence="1">Catalyzes the oxidative phosphorylation of glyceraldehyde 3-phosphate (G3P) to 1,3-bisphosphoglycerate (BPG) using the cofactor NAD. The first reaction step involves the formation of a hemiacetal intermediate between G3P and a cysteine residue, and this hemiacetal intermediate is then oxidized to a thioester, with concomitant reduction of NAD to NADH. The reduced NADH is then exchanged with the second NAD, and the thioester is attacked by a nucleophilic inorganic phosphate to produce BPG.</text>
</comment>
<comment type="catalytic activity">
    <reaction evidence="2">
        <text>D-glyceraldehyde 3-phosphate + phosphate + NAD(+) = (2R)-3-phospho-glyceroyl phosphate + NADH + H(+)</text>
        <dbReference type="Rhea" id="RHEA:10300"/>
        <dbReference type="ChEBI" id="CHEBI:15378"/>
        <dbReference type="ChEBI" id="CHEBI:43474"/>
        <dbReference type="ChEBI" id="CHEBI:57540"/>
        <dbReference type="ChEBI" id="CHEBI:57604"/>
        <dbReference type="ChEBI" id="CHEBI:57945"/>
        <dbReference type="ChEBI" id="CHEBI:59776"/>
        <dbReference type="EC" id="1.2.1.12"/>
    </reaction>
</comment>
<comment type="pathway">
    <text evidence="4">Carbohydrate degradation; glycolysis; pyruvate from D-glyceraldehyde 3-phosphate: step 1/5.</text>
</comment>
<comment type="subunit">
    <text evidence="3">Homotetramer.</text>
</comment>
<comment type="subcellular location">
    <subcellularLocation>
        <location evidence="4">Cytoplasm</location>
    </subcellularLocation>
</comment>
<comment type="similarity">
    <text evidence="4">Belongs to the glyceraldehyde-3-phosphate dehydrogenase family.</text>
</comment>
<name>G3P_AQUAE</name>
<dbReference type="EC" id="1.2.1.12" evidence="2"/>
<dbReference type="EMBL" id="AE000657">
    <property type="protein sequence ID" value="AAC07122.1"/>
    <property type="molecule type" value="Genomic_DNA"/>
</dbReference>
<dbReference type="PIR" id="F70391">
    <property type="entry name" value="F70391"/>
</dbReference>
<dbReference type="RefSeq" id="NP_213724.1">
    <property type="nucleotide sequence ID" value="NC_000918.1"/>
</dbReference>
<dbReference type="RefSeq" id="WP_010880662.1">
    <property type="nucleotide sequence ID" value="NC_000918.1"/>
</dbReference>
<dbReference type="PDB" id="2EP7">
    <property type="method" value="X-ray"/>
    <property type="resolution" value="2.30 A"/>
    <property type="chains" value="A/B=1-342"/>
</dbReference>
<dbReference type="PDBsum" id="2EP7"/>
<dbReference type="SMR" id="O67161"/>
<dbReference type="FunCoup" id="O67161">
    <property type="interactions" value="427"/>
</dbReference>
<dbReference type="STRING" id="224324.aq_1065"/>
<dbReference type="EnsemblBacteria" id="AAC07122">
    <property type="protein sequence ID" value="AAC07122"/>
    <property type="gene ID" value="aq_1065"/>
</dbReference>
<dbReference type="KEGG" id="aae:aq_1065"/>
<dbReference type="PATRIC" id="fig|224324.8.peg.825"/>
<dbReference type="eggNOG" id="COG0057">
    <property type="taxonomic scope" value="Bacteria"/>
</dbReference>
<dbReference type="HOGENOM" id="CLU_030140_0_2_0"/>
<dbReference type="InParanoid" id="O67161"/>
<dbReference type="OrthoDB" id="9803304at2"/>
<dbReference type="UniPathway" id="UPA00109">
    <property type="reaction ID" value="UER00184"/>
</dbReference>
<dbReference type="EvolutionaryTrace" id="O67161"/>
<dbReference type="Proteomes" id="UP000000798">
    <property type="component" value="Chromosome"/>
</dbReference>
<dbReference type="GO" id="GO:0005737">
    <property type="term" value="C:cytoplasm"/>
    <property type="evidence" value="ECO:0007669"/>
    <property type="project" value="UniProtKB-SubCell"/>
</dbReference>
<dbReference type="GO" id="GO:0004365">
    <property type="term" value="F:glyceraldehyde-3-phosphate dehydrogenase (NAD+) (phosphorylating) activity"/>
    <property type="evidence" value="ECO:0000250"/>
    <property type="project" value="UniProtKB"/>
</dbReference>
<dbReference type="GO" id="GO:0051287">
    <property type="term" value="F:NAD binding"/>
    <property type="evidence" value="ECO:0000250"/>
    <property type="project" value="UniProtKB"/>
</dbReference>
<dbReference type="GO" id="GO:0050661">
    <property type="term" value="F:NADP binding"/>
    <property type="evidence" value="ECO:0007669"/>
    <property type="project" value="InterPro"/>
</dbReference>
<dbReference type="GO" id="GO:0006006">
    <property type="term" value="P:glucose metabolic process"/>
    <property type="evidence" value="ECO:0000318"/>
    <property type="project" value="GO_Central"/>
</dbReference>
<dbReference type="GO" id="GO:0006096">
    <property type="term" value="P:glycolytic process"/>
    <property type="evidence" value="ECO:0007669"/>
    <property type="project" value="UniProtKB-UniPathway"/>
</dbReference>
<dbReference type="CDD" id="cd18126">
    <property type="entry name" value="GAPDH_I_C"/>
    <property type="match status" value="1"/>
</dbReference>
<dbReference type="CDD" id="cd05214">
    <property type="entry name" value="GAPDH_I_N"/>
    <property type="match status" value="1"/>
</dbReference>
<dbReference type="FunFam" id="3.30.360.10:FF:000002">
    <property type="entry name" value="Glyceraldehyde-3-phosphate dehydrogenase"/>
    <property type="match status" value="1"/>
</dbReference>
<dbReference type="FunFam" id="3.40.50.720:FF:000001">
    <property type="entry name" value="Glyceraldehyde-3-phosphate dehydrogenase"/>
    <property type="match status" value="1"/>
</dbReference>
<dbReference type="Gene3D" id="3.30.360.10">
    <property type="entry name" value="Dihydrodipicolinate Reductase, domain 2"/>
    <property type="match status" value="1"/>
</dbReference>
<dbReference type="Gene3D" id="3.40.50.720">
    <property type="entry name" value="NAD(P)-binding Rossmann-like Domain"/>
    <property type="match status" value="1"/>
</dbReference>
<dbReference type="InterPro" id="IPR020831">
    <property type="entry name" value="GlycerAld/Erythrose_P_DH"/>
</dbReference>
<dbReference type="InterPro" id="IPR020830">
    <property type="entry name" value="GlycerAld_3-P_DH_AS"/>
</dbReference>
<dbReference type="InterPro" id="IPR020829">
    <property type="entry name" value="GlycerAld_3-P_DH_cat"/>
</dbReference>
<dbReference type="InterPro" id="IPR020828">
    <property type="entry name" value="GlycerAld_3-P_DH_NAD(P)-bd"/>
</dbReference>
<dbReference type="InterPro" id="IPR006424">
    <property type="entry name" value="Glyceraldehyde-3-P_DH_1"/>
</dbReference>
<dbReference type="InterPro" id="IPR036291">
    <property type="entry name" value="NAD(P)-bd_dom_sf"/>
</dbReference>
<dbReference type="NCBIfam" id="TIGR01534">
    <property type="entry name" value="GAPDH-I"/>
    <property type="match status" value="1"/>
</dbReference>
<dbReference type="PANTHER" id="PTHR43148">
    <property type="entry name" value="GLYCERALDEHYDE-3-PHOSPHATE DEHYDROGENASE 2"/>
    <property type="match status" value="1"/>
</dbReference>
<dbReference type="Pfam" id="PF02800">
    <property type="entry name" value="Gp_dh_C"/>
    <property type="match status" value="1"/>
</dbReference>
<dbReference type="Pfam" id="PF00044">
    <property type="entry name" value="Gp_dh_N"/>
    <property type="match status" value="1"/>
</dbReference>
<dbReference type="PIRSF" id="PIRSF000149">
    <property type="entry name" value="GAP_DH"/>
    <property type="match status" value="1"/>
</dbReference>
<dbReference type="PRINTS" id="PR00078">
    <property type="entry name" value="G3PDHDRGNASE"/>
</dbReference>
<dbReference type="SMART" id="SM00846">
    <property type="entry name" value="Gp_dh_N"/>
    <property type="match status" value="1"/>
</dbReference>
<dbReference type="SUPFAM" id="SSF55347">
    <property type="entry name" value="Glyceraldehyde-3-phosphate dehydrogenase-like, C-terminal domain"/>
    <property type="match status" value="1"/>
</dbReference>
<dbReference type="SUPFAM" id="SSF51735">
    <property type="entry name" value="NAD(P)-binding Rossmann-fold domains"/>
    <property type="match status" value="1"/>
</dbReference>
<dbReference type="PROSITE" id="PS00071">
    <property type="entry name" value="GAPDH"/>
    <property type="match status" value="1"/>
</dbReference>
<organism>
    <name type="scientific">Aquifex aeolicus (strain VF5)</name>
    <dbReference type="NCBI Taxonomy" id="224324"/>
    <lineage>
        <taxon>Bacteria</taxon>
        <taxon>Pseudomonadati</taxon>
        <taxon>Aquificota</taxon>
        <taxon>Aquificia</taxon>
        <taxon>Aquificales</taxon>
        <taxon>Aquificaceae</taxon>
        <taxon>Aquifex</taxon>
    </lineage>
</organism>
<proteinExistence type="evidence at protein level"/>
<reference key="1">
    <citation type="journal article" date="1998" name="Nature">
        <title>The complete genome of the hyperthermophilic bacterium Aquifex aeolicus.</title>
        <authorList>
            <person name="Deckert G."/>
            <person name="Warren P.V."/>
            <person name="Gaasterland T."/>
            <person name="Young W.G."/>
            <person name="Lenox A.L."/>
            <person name="Graham D.E."/>
            <person name="Overbeek R."/>
            <person name="Snead M.A."/>
            <person name="Keller M."/>
            <person name="Aujay M."/>
            <person name="Huber R."/>
            <person name="Feldman R.A."/>
            <person name="Short J.M."/>
            <person name="Olsen G.J."/>
            <person name="Swanson R.V."/>
        </authorList>
    </citation>
    <scope>NUCLEOTIDE SEQUENCE [LARGE SCALE GENOMIC DNA]</scope>
    <source>
        <strain>VF5</strain>
    </source>
</reference>
<reference key="2">
    <citation type="submission" date="2007-03" db="PDB data bank">
        <title>Structural study of Project ID aq_1065 from Aquifex aeolicus VF5.</title>
        <authorList>
            <consortium name="RIKEN structural genomics initiative (RSGI)"/>
        </authorList>
    </citation>
    <scope>X-RAY CRYSTALLOGRAPHY (2.30 ANGSTROMS) IN COMPLEX WITH NAD</scope>
    <scope>SUBUNIT</scope>
</reference>
<protein>
    <recommendedName>
        <fullName evidence="1">Glyceraldehyde-3-phosphate dehydrogenase</fullName>
        <shortName evidence="1">GAPDH</shortName>
        <ecNumber evidence="2">1.2.1.12</ecNumber>
    </recommendedName>
    <alternativeName>
        <fullName evidence="1">NAD-dependent glyceraldehyde-3-phosphate dehydrogenase</fullName>
    </alternativeName>
</protein>
<evidence type="ECO:0000250" key="1">
    <source>
        <dbReference type="UniProtKB" id="P00362"/>
    </source>
</evidence>
<evidence type="ECO:0000250" key="2">
    <source>
        <dbReference type="UniProtKB" id="P09124"/>
    </source>
</evidence>
<evidence type="ECO:0000269" key="3">
    <source ref="2"/>
</evidence>
<evidence type="ECO:0000305" key="4"/>
<evidence type="ECO:0007829" key="5">
    <source>
        <dbReference type="PDB" id="2EP7"/>
    </source>
</evidence>
<gene>
    <name type="primary">gap</name>
    <name type="ordered locus">aq_1065</name>
</gene>